<evidence type="ECO:0000255" key="1">
    <source>
        <dbReference type="HAMAP-Rule" id="MF_00150"/>
    </source>
</evidence>
<evidence type="ECO:0007829" key="2">
    <source>
        <dbReference type="PDB" id="2I3G"/>
    </source>
</evidence>
<evidence type="ECO:0007829" key="3">
    <source>
        <dbReference type="PDB" id="7NNI"/>
    </source>
</evidence>
<evidence type="ECO:0007829" key="4">
    <source>
        <dbReference type="PDB" id="7NOT"/>
    </source>
</evidence>
<gene>
    <name evidence="1" type="primary">argC</name>
    <name type="ordered locus">Rv1652</name>
    <name type="ORF">MTCY06H11.17</name>
</gene>
<feature type="chain" id="PRO_0000112424" description="N-acetyl-gamma-glutamyl-phosphate reductase">
    <location>
        <begin position="1"/>
        <end position="352"/>
    </location>
</feature>
<feature type="active site" evidence="1">
    <location>
        <position position="158"/>
    </location>
</feature>
<feature type="strand" evidence="3">
    <location>
        <begin position="10"/>
        <end position="15"/>
    </location>
</feature>
<feature type="turn" evidence="3">
    <location>
        <begin position="16"/>
        <end position="18"/>
    </location>
</feature>
<feature type="helix" evidence="3">
    <location>
        <begin position="20"/>
        <end position="31"/>
    </location>
</feature>
<feature type="helix" evidence="3">
    <location>
        <begin position="33"/>
        <end position="36"/>
    </location>
</feature>
<feature type="strand" evidence="3">
    <location>
        <begin position="39"/>
        <end position="49"/>
    </location>
</feature>
<feature type="strand" evidence="4">
    <location>
        <begin position="52"/>
        <end position="54"/>
    </location>
</feature>
<feature type="helix" evidence="3">
    <location>
        <begin position="55"/>
        <end position="58"/>
    </location>
</feature>
<feature type="helix" evidence="3">
    <location>
        <begin position="63"/>
        <end position="65"/>
    </location>
</feature>
<feature type="helix" evidence="3">
    <location>
        <begin position="75"/>
        <end position="78"/>
    </location>
</feature>
<feature type="strand" evidence="3">
    <location>
        <begin position="82"/>
        <end position="86"/>
    </location>
</feature>
<feature type="strand" evidence="2">
    <location>
        <begin position="90"/>
        <end position="92"/>
    </location>
</feature>
<feature type="helix" evidence="3">
    <location>
        <begin position="94"/>
        <end position="99"/>
    </location>
</feature>
<feature type="strand" evidence="3">
    <location>
        <begin position="104"/>
        <end position="108"/>
    </location>
</feature>
<feature type="turn" evidence="3">
    <location>
        <begin position="112"/>
        <end position="114"/>
    </location>
</feature>
<feature type="helix" evidence="3">
    <location>
        <begin position="118"/>
        <end position="125"/>
    </location>
</feature>
<feature type="helix" evidence="3">
    <location>
        <begin position="143"/>
        <end position="147"/>
    </location>
</feature>
<feature type="strand" evidence="3">
    <location>
        <begin position="151"/>
        <end position="154"/>
    </location>
</feature>
<feature type="helix" evidence="3">
    <location>
        <begin position="158"/>
        <end position="172"/>
    </location>
</feature>
<feature type="strand" evidence="3">
    <location>
        <begin position="178"/>
        <end position="186"/>
    </location>
</feature>
<feature type="helix" evidence="3">
    <location>
        <begin position="188"/>
        <end position="191"/>
    </location>
</feature>
<feature type="helix" evidence="3">
    <location>
        <begin position="197"/>
        <end position="199"/>
    </location>
</feature>
<feature type="helix" evidence="3">
    <location>
        <begin position="201"/>
        <end position="204"/>
    </location>
</feature>
<feature type="turn" evidence="3">
    <location>
        <begin position="213"/>
        <end position="216"/>
    </location>
</feature>
<feature type="helix" evidence="3">
    <location>
        <begin position="219"/>
        <end position="228"/>
    </location>
</feature>
<feature type="strand" evidence="3">
    <location>
        <begin position="236"/>
        <end position="243"/>
    </location>
</feature>
<feature type="strand" evidence="3">
    <location>
        <begin position="250"/>
        <end position="257"/>
    </location>
</feature>
<feature type="helix" evidence="3">
    <location>
        <begin position="262"/>
        <end position="273"/>
    </location>
</feature>
<feature type="strand" evidence="3">
    <location>
        <begin position="279"/>
        <end position="281"/>
    </location>
</feature>
<feature type="helix" evidence="3">
    <location>
        <begin position="290"/>
        <end position="292"/>
    </location>
</feature>
<feature type="turn" evidence="3">
    <location>
        <begin position="293"/>
        <end position="295"/>
    </location>
</feature>
<feature type="strand" evidence="3">
    <location>
        <begin position="299"/>
        <end position="306"/>
    </location>
</feature>
<feature type="turn" evidence="3">
    <location>
        <begin position="307"/>
        <end position="310"/>
    </location>
</feature>
<feature type="strand" evidence="3">
    <location>
        <begin position="311"/>
        <end position="318"/>
    </location>
</feature>
<feature type="turn" evidence="3">
    <location>
        <begin position="320"/>
        <end position="325"/>
    </location>
</feature>
<feature type="helix" evidence="3">
    <location>
        <begin position="326"/>
        <end position="337"/>
    </location>
</feature>
<feature type="turn" evidence="3">
    <location>
        <begin position="341"/>
        <end position="344"/>
    </location>
</feature>
<accession>P9WPZ9</accession>
<accession>L0T7J2</accession>
<accession>P63562</accession>
<accession>P94987</accession>
<comment type="function">
    <text evidence="1">Catalyzes the NADPH-dependent reduction of N-acetyl-5-glutamyl phosphate to yield N-acetyl-L-glutamate 5-semialdehyde.</text>
</comment>
<comment type="catalytic activity">
    <reaction evidence="1">
        <text>N-acetyl-L-glutamate 5-semialdehyde + phosphate + NADP(+) = N-acetyl-L-glutamyl 5-phosphate + NADPH + H(+)</text>
        <dbReference type="Rhea" id="RHEA:21588"/>
        <dbReference type="ChEBI" id="CHEBI:15378"/>
        <dbReference type="ChEBI" id="CHEBI:29123"/>
        <dbReference type="ChEBI" id="CHEBI:43474"/>
        <dbReference type="ChEBI" id="CHEBI:57783"/>
        <dbReference type="ChEBI" id="CHEBI:57936"/>
        <dbReference type="ChEBI" id="CHEBI:58349"/>
        <dbReference type="EC" id="1.2.1.38"/>
    </reaction>
</comment>
<comment type="pathway">
    <text evidence="1">Amino-acid biosynthesis; L-arginine biosynthesis; N(2)-acetyl-L-ornithine from L-glutamate: step 3/4.</text>
</comment>
<comment type="subcellular location">
    <subcellularLocation>
        <location evidence="1">Cytoplasm</location>
    </subcellularLocation>
</comment>
<comment type="miscellaneous">
    <text>Was identified as a high-confidence drug target.</text>
</comment>
<comment type="similarity">
    <text evidence="1">Belongs to the NAGSA dehydrogenase family. Type 1 subfamily.</text>
</comment>
<name>ARGC_MYCTU</name>
<organism>
    <name type="scientific">Mycobacterium tuberculosis (strain ATCC 25618 / H37Rv)</name>
    <dbReference type="NCBI Taxonomy" id="83332"/>
    <lineage>
        <taxon>Bacteria</taxon>
        <taxon>Bacillati</taxon>
        <taxon>Actinomycetota</taxon>
        <taxon>Actinomycetes</taxon>
        <taxon>Mycobacteriales</taxon>
        <taxon>Mycobacteriaceae</taxon>
        <taxon>Mycobacterium</taxon>
        <taxon>Mycobacterium tuberculosis complex</taxon>
    </lineage>
</organism>
<protein>
    <recommendedName>
        <fullName evidence="1">N-acetyl-gamma-glutamyl-phosphate reductase</fullName>
        <shortName evidence="1">AGPR</shortName>
        <ecNumber evidence="1">1.2.1.38</ecNumber>
    </recommendedName>
    <alternativeName>
        <fullName evidence="1">N-acetyl-glutamate semialdehyde dehydrogenase</fullName>
        <shortName evidence="1">NAGSA dehydrogenase</shortName>
    </alternativeName>
</protein>
<keyword id="KW-0002">3D-structure</keyword>
<keyword id="KW-0028">Amino-acid biosynthesis</keyword>
<keyword id="KW-0055">Arginine biosynthesis</keyword>
<keyword id="KW-0963">Cytoplasm</keyword>
<keyword id="KW-0521">NADP</keyword>
<keyword id="KW-0560">Oxidoreductase</keyword>
<keyword id="KW-1185">Reference proteome</keyword>
<sequence length="352" mass="36304">MQNRQVANATKVAVAGASGYAGGEILRLLLGHPAYADGRLRIGALTAATSAGSTLGEHHPHLTPLAHRVVEPTEAAVLGGHDAVFLALPHGHSAVLAQQLSPETLIIDCGADFRLTDAAVWERFYGSSHAGSWPYGLPELPGARDQLRGTRRIAVPGCYPTAALLALFPALAADLIEPAVTVVAVSGTSGAGRAATTDLLGAEVIGSARAYNIAGVHRHTPEIAQGLRAVTDRDVSVSFTPVLIPASRGILATCTARTRSPLSQLRAAYEKAYHAEPFIYLMPEGQLPRTGAVIGSNAAHIAVAVDEDAQTFVAIAAIDNLVKGTAGAAVQSMNLALGWPETDGLSVVGVAP</sequence>
<proteinExistence type="evidence at protein level"/>
<dbReference type="EC" id="1.2.1.38" evidence="1"/>
<dbReference type="EMBL" id="AL123456">
    <property type="protein sequence ID" value="CCP44417.1"/>
    <property type="molecule type" value="Genomic_DNA"/>
</dbReference>
<dbReference type="PIR" id="G70620">
    <property type="entry name" value="G70620"/>
</dbReference>
<dbReference type="RefSeq" id="NP_216168.1">
    <property type="nucleotide sequence ID" value="NC_000962.3"/>
</dbReference>
<dbReference type="RefSeq" id="WP_003898960.1">
    <property type="nucleotide sequence ID" value="NZ_NVQJ01000069.1"/>
</dbReference>
<dbReference type="PDB" id="2I3A">
    <property type="method" value="X-ray"/>
    <property type="resolution" value="2.15 A"/>
    <property type="chains" value="A/B/C/D=1-352"/>
</dbReference>
<dbReference type="PDB" id="2I3G">
    <property type="method" value="X-ray"/>
    <property type="resolution" value="1.85 A"/>
    <property type="chains" value="A/B=1-352"/>
</dbReference>
<dbReference type="PDB" id="2NQT">
    <property type="method" value="X-ray"/>
    <property type="resolution" value="1.58 A"/>
    <property type="chains" value="A/B=1-352"/>
</dbReference>
<dbReference type="PDB" id="7NNI">
    <property type="method" value="X-ray"/>
    <property type="resolution" value="1.54 A"/>
    <property type="chains" value="A/B=1-352"/>
</dbReference>
<dbReference type="PDB" id="7NNQ">
    <property type="method" value="X-ray"/>
    <property type="resolution" value="1.73 A"/>
    <property type="chains" value="A/B/C/D=9-352"/>
</dbReference>
<dbReference type="PDB" id="7NNR">
    <property type="method" value="X-ray"/>
    <property type="resolution" value="1.70 A"/>
    <property type="chains" value="A/B=1-352"/>
</dbReference>
<dbReference type="PDB" id="7NOT">
    <property type="method" value="X-ray"/>
    <property type="resolution" value="2.54 A"/>
    <property type="chains" value="A/B/C/D/E/F/G/H=9-352"/>
</dbReference>
<dbReference type="PDB" id="7NPH">
    <property type="method" value="X-ray"/>
    <property type="resolution" value="2.57 A"/>
    <property type="chains" value="A/B/C/D/E/F/G/H=1-352"/>
</dbReference>
<dbReference type="PDB" id="7NPJ">
    <property type="method" value="X-ray"/>
    <property type="resolution" value="2.81 A"/>
    <property type="chains" value="A/B/C/D/E/F/G/H=1-352"/>
</dbReference>
<dbReference type="PDBsum" id="2I3A"/>
<dbReference type="PDBsum" id="2I3G"/>
<dbReference type="PDBsum" id="2NQT"/>
<dbReference type="PDBsum" id="7NNI"/>
<dbReference type="PDBsum" id="7NNQ"/>
<dbReference type="PDBsum" id="7NNR"/>
<dbReference type="PDBsum" id="7NOT"/>
<dbReference type="PDBsum" id="7NPH"/>
<dbReference type="PDBsum" id="7NPJ"/>
<dbReference type="SMR" id="P9WPZ9"/>
<dbReference type="FunCoup" id="P9WPZ9">
    <property type="interactions" value="133"/>
</dbReference>
<dbReference type="STRING" id="83332.Rv1652"/>
<dbReference type="PaxDb" id="83332-Rv1652"/>
<dbReference type="GeneID" id="45425622"/>
<dbReference type="GeneID" id="885278"/>
<dbReference type="KEGG" id="mtu:Rv1652"/>
<dbReference type="KEGG" id="mtv:RVBD_1652"/>
<dbReference type="TubercuList" id="Rv1652"/>
<dbReference type="eggNOG" id="COG0002">
    <property type="taxonomic scope" value="Bacteria"/>
</dbReference>
<dbReference type="InParanoid" id="P9WPZ9"/>
<dbReference type="OrthoDB" id="9801289at2"/>
<dbReference type="PhylomeDB" id="P9WPZ9"/>
<dbReference type="BRENDA" id="1.2.1.38">
    <property type="organism ID" value="3445"/>
</dbReference>
<dbReference type="UniPathway" id="UPA00068">
    <property type="reaction ID" value="UER00108"/>
</dbReference>
<dbReference type="EvolutionaryTrace" id="P9WPZ9"/>
<dbReference type="Proteomes" id="UP000001584">
    <property type="component" value="Chromosome"/>
</dbReference>
<dbReference type="GO" id="GO:0005737">
    <property type="term" value="C:cytoplasm"/>
    <property type="evidence" value="ECO:0007669"/>
    <property type="project" value="UniProtKB-SubCell"/>
</dbReference>
<dbReference type="GO" id="GO:0003942">
    <property type="term" value="F:N-acetyl-gamma-glutamyl-phosphate reductase activity"/>
    <property type="evidence" value="ECO:0007669"/>
    <property type="project" value="UniProtKB-UniRule"/>
</dbReference>
<dbReference type="GO" id="GO:0051287">
    <property type="term" value="F:NAD binding"/>
    <property type="evidence" value="ECO:0007669"/>
    <property type="project" value="InterPro"/>
</dbReference>
<dbReference type="GO" id="GO:0070401">
    <property type="term" value="F:NADP+ binding"/>
    <property type="evidence" value="ECO:0000314"/>
    <property type="project" value="MTBBASE"/>
</dbReference>
<dbReference type="GO" id="GO:0006526">
    <property type="term" value="P:L-arginine biosynthetic process"/>
    <property type="evidence" value="ECO:0007669"/>
    <property type="project" value="UniProtKB-UniRule"/>
</dbReference>
<dbReference type="CDD" id="cd24148">
    <property type="entry name" value="AGPR_1_actinobacAGPR_like"/>
    <property type="match status" value="1"/>
</dbReference>
<dbReference type="CDD" id="cd23934">
    <property type="entry name" value="AGPR_1_C"/>
    <property type="match status" value="1"/>
</dbReference>
<dbReference type="FunFam" id="3.30.360.10:FF:000014">
    <property type="entry name" value="N-acetyl-gamma-glutamyl-phosphate reductase"/>
    <property type="match status" value="1"/>
</dbReference>
<dbReference type="Gene3D" id="3.30.360.10">
    <property type="entry name" value="Dihydrodipicolinate Reductase, domain 2"/>
    <property type="match status" value="1"/>
</dbReference>
<dbReference type="Gene3D" id="3.40.50.720">
    <property type="entry name" value="NAD(P)-binding Rossmann-like Domain"/>
    <property type="match status" value="1"/>
</dbReference>
<dbReference type="HAMAP" id="MF_00150">
    <property type="entry name" value="ArgC_type1"/>
    <property type="match status" value="1"/>
</dbReference>
<dbReference type="InterPro" id="IPR023013">
    <property type="entry name" value="AGPR_AS"/>
</dbReference>
<dbReference type="InterPro" id="IPR000706">
    <property type="entry name" value="AGPR_type-1"/>
</dbReference>
<dbReference type="InterPro" id="IPR036291">
    <property type="entry name" value="NAD(P)-bd_dom_sf"/>
</dbReference>
<dbReference type="InterPro" id="IPR050085">
    <property type="entry name" value="NAGSA_dehydrogenase"/>
</dbReference>
<dbReference type="InterPro" id="IPR000534">
    <property type="entry name" value="Semialdehyde_DH_NAD-bd"/>
</dbReference>
<dbReference type="NCBIfam" id="TIGR01850">
    <property type="entry name" value="argC"/>
    <property type="match status" value="1"/>
</dbReference>
<dbReference type="PANTHER" id="PTHR32338:SF10">
    <property type="entry name" value="N-ACETYL-GAMMA-GLUTAMYL-PHOSPHATE REDUCTASE, CHLOROPLASTIC-RELATED"/>
    <property type="match status" value="1"/>
</dbReference>
<dbReference type="PANTHER" id="PTHR32338">
    <property type="entry name" value="N-ACETYL-GAMMA-GLUTAMYL-PHOSPHATE REDUCTASE, CHLOROPLASTIC-RELATED-RELATED"/>
    <property type="match status" value="1"/>
</dbReference>
<dbReference type="Pfam" id="PF01118">
    <property type="entry name" value="Semialdhyde_dh"/>
    <property type="match status" value="1"/>
</dbReference>
<dbReference type="Pfam" id="PF22698">
    <property type="entry name" value="Semialdhyde_dhC_1"/>
    <property type="match status" value="1"/>
</dbReference>
<dbReference type="SMART" id="SM00859">
    <property type="entry name" value="Semialdhyde_dh"/>
    <property type="match status" value="1"/>
</dbReference>
<dbReference type="SUPFAM" id="SSF55347">
    <property type="entry name" value="Glyceraldehyde-3-phosphate dehydrogenase-like, C-terminal domain"/>
    <property type="match status" value="1"/>
</dbReference>
<dbReference type="SUPFAM" id="SSF51735">
    <property type="entry name" value="NAD(P)-binding Rossmann-fold domains"/>
    <property type="match status" value="1"/>
</dbReference>
<dbReference type="PROSITE" id="PS01224">
    <property type="entry name" value="ARGC"/>
    <property type="match status" value="1"/>
</dbReference>
<reference key="1">
    <citation type="journal article" date="1998" name="Nature">
        <title>Deciphering the biology of Mycobacterium tuberculosis from the complete genome sequence.</title>
        <authorList>
            <person name="Cole S.T."/>
            <person name="Brosch R."/>
            <person name="Parkhill J."/>
            <person name="Garnier T."/>
            <person name="Churcher C.M."/>
            <person name="Harris D.E."/>
            <person name="Gordon S.V."/>
            <person name="Eiglmeier K."/>
            <person name="Gas S."/>
            <person name="Barry C.E. III"/>
            <person name="Tekaia F."/>
            <person name="Badcock K."/>
            <person name="Basham D."/>
            <person name="Brown D."/>
            <person name="Chillingworth T."/>
            <person name="Connor R."/>
            <person name="Davies R.M."/>
            <person name="Devlin K."/>
            <person name="Feltwell T."/>
            <person name="Gentles S."/>
            <person name="Hamlin N."/>
            <person name="Holroyd S."/>
            <person name="Hornsby T."/>
            <person name="Jagels K."/>
            <person name="Krogh A."/>
            <person name="McLean J."/>
            <person name="Moule S."/>
            <person name="Murphy L.D."/>
            <person name="Oliver S."/>
            <person name="Osborne J."/>
            <person name="Quail M.A."/>
            <person name="Rajandream M.A."/>
            <person name="Rogers J."/>
            <person name="Rutter S."/>
            <person name="Seeger K."/>
            <person name="Skelton S."/>
            <person name="Squares S."/>
            <person name="Squares R."/>
            <person name="Sulston J.E."/>
            <person name="Taylor K."/>
            <person name="Whitehead S."/>
            <person name="Barrell B.G."/>
        </authorList>
    </citation>
    <scope>NUCLEOTIDE SEQUENCE [LARGE SCALE GENOMIC DNA]</scope>
    <source>
        <strain>ATCC 25618 / H37Rv</strain>
    </source>
</reference>
<reference key="2">
    <citation type="journal article" date="2008" name="BMC Syst. Biol.">
        <title>targetTB: a target identification pipeline for Mycobacterium tuberculosis through an interactome, reactome and genome-scale structural analysis.</title>
        <authorList>
            <person name="Raman K."/>
            <person name="Yeturu K."/>
            <person name="Chandra N."/>
        </authorList>
    </citation>
    <scope>IDENTIFICATION AS A DRUG TARGET [LARGE SCALE ANALYSIS]</scope>
</reference>
<reference key="3">
    <citation type="journal article" date="2011" name="Mol. Cell. Proteomics">
        <title>Proteogenomic analysis of Mycobacterium tuberculosis by high resolution mass spectrometry.</title>
        <authorList>
            <person name="Kelkar D.S."/>
            <person name="Kumar D."/>
            <person name="Kumar P."/>
            <person name="Balakrishnan L."/>
            <person name="Muthusamy B."/>
            <person name="Yadav A.K."/>
            <person name="Shrivastava P."/>
            <person name="Marimuthu A."/>
            <person name="Anand S."/>
            <person name="Sundaram H."/>
            <person name="Kingsbury R."/>
            <person name="Harsha H.C."/>
            <person name="Nair B."/>
            <person name="Prasad T.S."/>
            <person name="Chauhan D.S."/>
            <person name="Katoch K."/>
            <person name="Katoch V.M."/>
            <person name="Kumar P."/>
            <person name="Chaerkady R."/>
            <person name="Ramachandran S."/>
            <person name="Dash D."/>
            <person name="Pandey A."/>
        </authorList>
    </citation>
    <scope>IDENTIFICATION BY MASS SPECTROMETRY [LARGE SCALE ANALYSIS]</scope>
    <source>
        <strain>ATCC 25618 / H37Rv</strain>
    </source>
</reference>